<gene>
    <name evidence="3" type="primary">bpsA</name>
</gene>
<evidence type="ECO:0000255" key="1">
    <source>
        <dbReference type="PROSITE-ProRule" id="PRU00258"/>
    </source>
</evidence>
<evidence type="ECO:0000269" key="2">
    <source>
    </source>
</evidence>
<evidence type="ECO:0000303" key="3">
    <source>
    </source>
</evidence>
<evidence type="ECO:0000305" key="4"/>
<evidence type="ECO:0000305" key="5">
    <source>
    </source>
</evidence>
<evidence type="ECO:0000312" key="6">
    <source>
        <dbReference type="EMBL" id="BAE93896.1"/>
    </source>
</evidence>
<comment type="function">
    <text evidence="2">Nonribosomal peptide synthetase involved in the biosynthesis of the blue pigment indigoidine (PubMed:17237222). Catalyzes the synthesis of the blue pigment using L-Gln as a substrate (PubMed:17237222). Two glutamine molecules are cyclized and oxidized to form indigoidine (PubMed:17237222).</text>
</comment>
<comment type="catalytic activity">
    <reaction evidence="2">
        <text>2 FMN + 2 L-glutamine + 2 ATP + O2 = indigoidine + 2 FMNH2 + 2 AMP + 2 diphosphate + 2 H2O</text>
        <dbReference type="Rhea" id="RHEA:81499"/>
        <dbReference type="ChEBI" id="CHEBI:15377"/>
        <dbReference type="ChEBI" id="CHEBI:15379"/>
        <dbReference type="ChEBI" id="CHEBI:30616"/>
        <dbReference type="ChEBI" id="CHEBI:33019"/>
        <dbReference type="ChEBI" id="CHEBI:57618"/>
        <dbReference type="ChEBI" id="CHEBI:58210"/>
        <dbReference type="ChEBI" id="CHEBI:58359"/>
        <dbReference type="ChEBI" id="CHEBI:79296"/>
        <dbReference type="ChEBI" id="CHEBI:456215"/>
        <dbReference type="EC" id="4.3.3.9"/>
    </reaction>
    <physiologicalReaction direction="left-to-right" evidence="2">
        <dbReference type="Rhea" id="RHEA:81500"/>
    </physiologicalReaction>
</comment>
<comment type="catalytic activity">
    <reaction evidence="5">
        <text>FMN + L-glutamine + ATP = 3-amino-1,5-dihydropyridine-2,6-dione + FMNH2 + AMP + diphosphate</text>
        <dbReference type="Rhea" id="RHEA:81503"/>
        <dbReference type="ChEBI" id="CHEBI:30616"/>
        <dbReference type="ChEBI" id="CHEBI:33019"/>
        <dbReference type="ChEBI" id="CHEBI:57618"/>
        <dbReference type="ChEBI" id="CHEBI:58210"/>
        <dbReference type="ChEBI" id="CHEBI:58359"/>
        <dbReference type="ChEBI" id="CHEBI:231893"/>
        <dbReference type="ChEBI" id="CHEBI:456215"/>
    </reaction>
    <physiologicalReaction direction="left-to-right" evidence="5">
        <dbReference type="Rhea" id="RHEA:81504"/>
    </physiologicalReaction>
</comment>
<comment type="catalytic activity">
    <reaction evidence="5">
        <text>2 3-amino-1,5-dihydropyridine-2,6-dione + O2 = indigoidine + 2 H2O</text>
        <dbReference type="Rhea" id="RHEA:81507"/>
        <dbReference type="ChEBI" id="CHEBI:15377"/>
        <dbReference type="ChEBI" id="CHEBI:15379"/>
        <dbReference type="ChEBI" id="CHEBI:79296"/>
        <dbReference type="ChEBI" id="CHEBI:231893"/>
    </reaction>
    <physiologicalReaction direction="left-to-right" evidence="5">
        <dbReference type="Rhea" id="RHEA:81508"/>
    </physiologicalReaction>
</comment>
<comment type="cofactor">
    <cofactor evidence="2">
        <name>pantetheine 4'-phosphate</name>
        <dbReference type="ChEBI" id="CHEBI:47942"/>
    </cofactor>
</comment>
<comment type="biophysicochemical properties">
    <kinetics>
        <KM evidence="2">157 uM for L-glutamine</KM>
        <text evidence="2">kcat is 324 min(-1) with L-glutamine as substrate.</text>
    </kinetics>
</comment>
<comment type="pathway">
    <text evidence="2">Pigment biosynthesis.</text>
</comment>
<comment type="domain">
    <text evidence="2">Contains only one module with an adenylation (A) domain, a thiolation (T) domain and a thioesterase (TE) domain at the C-terminal end (PubMed:17237222). Contains a putative oxidation (Ox) domain integrated into the adenylation domain (PubMed:17237222).</text>
</comment>
<comment type="similarity">
    <text evidence="4">Belongs to the ATP-dependent AMP-binding enzyme family.</text>
</comment>
<accession>Q1MWN4</accession>
<proteinExistence type="evidence at protein level"/>
<organism>
    <name type="scientific">Streptomyces lavendulae</name>
    <dbReference type="NCBI Taxonomy" id="1914"/>
    <lineage>
        <taxon>Bacteria</taxon>
        <taxon>Bacillati</taxon>
        <taxon>Actinomycetota</taxon>
        <taxon>Actinomycetes</taxon>
        <taxon>Kitasatosporales</taxon>
        <taxon>Streptomycetaceae</taxon>
        <taxon>Streptomyces</taxon>
    </lineage>
</organism>
<feature type="chain" id="PRO_0000461773" description="Indigoidine synthase">
    <location>
        <begin position="1"/>
        <end position="1282"/>
    </location>
</feature>
<feature type="domain" description="Carrier" evidence="1">
    <location>
        <begin position="937"/>
        <end position="1012"/>
    </location>
</feature>
<feature type="region of interest" description="Adenylation" evidence="4">
    <location>
        <begin position="24"/>
        <end position="379"/>
    </location>
</feature>
<feature type="region of interest" description="Thioesterase" evidence="4">
    <location>
        <begin position="1030"/>
        <end position="1138"/>
    </location>
</feature>
<feature type="modified residue" description="O-(pantetheine 4'-phosphoryl)serine" evidence="2">
    <location>
        <position position="972"/>
    </location>
</feature>
<feature type="mutagenesis site" description="Abolishes FMN binding. Cannot synthesize indigoidine." evidence="2">
    <original>K</original>
    <variation>E</variation>
    <location>
        <position position="598"/>
    </location>
</feature>
<feature type="mutagenesis site" description="Abolishes FMN binding. Cannot synthesize indigoidine." evidence="2">
    <original>Y</original>
    <variation>A</variation>
    <location>
        <position position="601"/>
    </location>
</feature>
<feature type="mutagenesis site" description="Abolishes FMN binding. Cannot synthesize indigoidine." evidence="2">
    <original>S</original>
    <variation>F</variation>
    <location>
        <position position="603"/>
    </location>
</feature>
<feature type="mutagenesis site" description="Abolishes FMN binding. Cannot synthesize indigoidine." evidence="2">
    <original>Y</original>
    <variation>A</variation>
    <location>
        <position position="608"/>
    </location>
</feature>
<dbReference type="EC" id="4.3.3.9" evidence="2"/>
<dbReference type="EMBL" id="AB240063">
    <property type="protein sequence ID" value="BAE93896.1"/>
    <property type="molecule type" value="Genomic_DNA"/>
</dbReference>
<dbReference type="SMR" id="Q1MWN4"/>
<dbReference type="ESTHER" id="strla-q1mwn4">
    <property type="family name" value="Thioesterase"/>
</dbReference>
<dbReference type="KEGG" id="ag:BAE93896"/>
<dbReference type="GO" id="GO:0005829">
    <property type="term" value="C:cytosol"/>
    <property type="evidence" value="ECO:0007669"/>
    <property type="project" value="TreeGrafter"/>
</dbReference>
<dbReference type="GO" id="GO:0016829">
    <property type="term" value="F:lyase activity"/>
    <property type="evidence" value="ECO:0007669"/>
    <property type="project" value="UniProtKB-KW"/>
</dbReference>
<dbReference type="GO" id="GO:0016491">
    <property type="term" value="F:oxidoreductase activity"/>
    <property type="evidence" value="ECO:0007669"/>
    <property type="project" value="InterPro"/>
</dbReference>
<dbReference type="GO" id="GO:0031177">
    <property type="term" value="F:phosphopantetheine binding"/>
    <property type="evidence" value="ECO:0007669"/>
    <property type="project" value="InterPro"/>
</dbReference>
<dbReference type="GO" id="GO:0043041">
    <property type="term" value="P:amino acid activation for nonribosomal peptide biosynthetic process"/>
    <property type="evidence" value="ECO:0007669"/>
    <property type="project" value="TreeGrafter"/>
</dbReference>
<dbReference type="GO" id="GO:0017000">
    <property type="term" value="P:antibiotic biosynthetic process"/>
    <property type="evidence" value="ECO:0007669"/>
    <property type="project" value="UniProtKB-ARBA"/>
</dbReference>
<dbReference type="GO" id="GO:0044550">
    <property type="term" value="P:secondary metabolite biosynthetic process"/>
    <property type="evidence" value="ECO:0007669"/>
    <property type="project" value="TreeGrafter"/>
</dbReference>
<dbReference type="CDD" id="cd05930">
    <property type="entry name" value="A_NRPS"/>
    <property type="match status" value="1"/>
</dbReference>
<dbReference type="FunFam" id="1.10.1200.10:FF:000016">
    <property type="entry name" value="Non-ribosomal peptide synthase"/>
    <property type="match status" value="1"/>
</dbReference>
<dbReference type="FunFam" id="3.40.50.12780:FF:000012">
    <property type="entry name" value="Non-ribosomal peptide synthetase"/>
    <property type="match status" value="1"/>
</dbReference>
<dbReference type="FunFam" id="3.40.50.980:FF:000001">
    <property type="entry name" value="Non-ribosomal peptide synthetase"/>
    <property type="match status" value="1"/>
</dbReference>
<dbReference type="Gene3D" id="3.30.300.30">
    <property type="match status" value="2"/>
</dbReference>
<dbReference type="Gene3D" id="1.10.1200.10">
    <property type="entry name" value="ACP-like"/>
    <property type="match status" value="1"/>
</dbReference>
<dbReference type="Gene3D" id="3.40.50.1820">
    <property type="entry name" value="alpha/beta hydrolase"/>
    <property type="match status" value="1"/>
</dbReference>
<dbReference type="Gene3D" id="3.40.50.12780">
    <property type="entry name" value="N-terminal domain of ligase-like"/>
    <property type="match status" value="1"/>
</dbReference>
<dbReference type="Gene3D" id="3.40.109.10">
    <property type="entry name" value="NADH Oxidase"/>
    <property type="match status" value="1"/>
</dbReference>
<dbReference type="InterPro" id="IPR010071">
    <property type="entry name" value="AA_adenyl_dom"/>
</dbReference>
<dbReference type="InterPro" id="IPR029058">
    <property type="entry name" value="AB_hydrolase_fold"/>
</dbReference>
<dbReference type="InterPro" id="IPR036736">
    <property type="entry name" value="ACP-like_sf"/>
</dbReference>
<dbReference type="InterPro" id="IPR045851">
    <property type="entry name" value="AMP-bd_C_sf"/>
</dbReference>
<dbReference type="InterPro" id="IPR020459">
    <property type="entry name" value="AMP-binding"/>
</dbReference>
<dbReference type="InterPro" id="IPR020845">
    <property type="entry name" value="AMP-binding_CS"/>
</dbReference>
<dbReference type="InterPro" id="IPR000873">
    <property type="entry name" value="AMP-dep_synth/lig_dom"/>
</dbReference>
<dbReference type="InterPro" id="IPR042099">
    <property type="entry name" value="ANL_N_sf"/>
</dbReference>
<dbReference type="InterPro" id="IPR000415">
    <property type="entry name" value="Nitroreductase-like"/>
</dbReference>
<dbReference type="InterPro" id="IPR020806">
    <property type="entry name" value="PKS_PP-bd"/>
</dbReference>
<dbReference type="InterPro" id="IPR009081">
    <property type="entry name" value="PP-bd_ACP"/>
</dbReference>
<dbReference type="InterPro" id="IPR006162">
    <property type="entry name" value="Ppantetheine_attach_site"/>
</dbReference>
<dbReference type="InterPro" id="IPR001031">
    <property type="entry name" value="Thioesterase"/>
</dbReference>
<dbReference type="NCBIfam" id="TIGR01733">
    <property type="entry name" value="AA-adenyl-dom"/>
    <property type="match status" value="1"/>
</dbReference>
<dbReference type="PANTHER" id="PTHR45527:SF1">
    <property type="entry name" value="FATTY ACID SYNTHASE"/>
    <property type="match status" value="1"/>
</dbReference>
<dbReference type="PANTHER" id="PTHR45527">
    <property type="entry name" value="NONRIBOSOMAL PEPTIDE SYNTHETASE"/>
    <property type="match status" value="1"/>
</dbReference>
<dbReference type="Pfam" id="PF00501">
    <property type="entry name" value="AMP-binding"/>
    <property type="match status" value="1"/>
</dbReference>
<dbReference type="Pfam" id="PF00550">
    <property type="entry name" value="PP-binding"/>
    <property type="match status" value="1"/>
</dbReference>
<dbReference type="Pfam" id="PF00975">
    <property type="entry name" value="Thioesterase"/>
    <property type="match status" value="1"/>
</dbReference>
<dbReference type="PRINTS" id="PR00154">
    <property type="entry name" value="AMPBINDING"/>
</dbReference>
<dbReference type="SMART" id="SM00823">
    <property type="entry name" value="PKS_PP"/>
    <property type="match status" value="1"/>
</dbReference>
<dbReference type="SUPFAM" id="SSF56801">
    <property type="entry name" value="Acetyl-CoA synthetase-like"/>
    <property type="match status" value="1"/>
</dbReference>
<dbReference type="SUPFAM" id="SSF47336">
    <property type="entry name" value="ACP-like"/>
    <property type="match status" value="1"/>
</dbReference>
<dbReference type="SUPFAM" id="SSF53474">
    <property type="entry name" value="alpha/beta-Hydrolases"/>
    <property type="match status" value="1"/>
</dbReference>
<dbReference type="PROSITE" id="PS00455">
    <property type="entry name" value="AMP_BINDING"/>
    <property type="match status" value="1"/>
</dbReference>
<dbReference type="PROSITE" id="PS50075">
    <property type="entry name" value="CARRIER"/>
    <property type="match status" value="1"/>
</dbReference>
<dbReference type="PROSITE" id="PS00012">
    <property type="entry name" value="PHOSPHOPANTETHEINE"/>
    <property type="match status" value="1"/>
</dbReference>
<sequence>MTLQETSVLEPTLQGTTTLPGLLAQRVAEHPEAIAVAYRDDKLTFRELASRSAALADYLEHLGVSADDCVGLFVEPSIDLMVGAWGILNAGAAYLPLSPEYPEDRLRYMIENSETKIILAQQRLVSRLRELAPKDVTIVTLRESEAFVRPEGTEAPAARSARPDTLAYVIYTSGSTGKPKGVMIEHRSIVNQLGWLRETYAIDRSKVILQKTPMSFDAAQWEILSPANGATVVMGAPGVYADPEGLIETIVKHNVTTLQCVPTLLQGLIDTEKFPECVSLQQIFSGGEALSRLLAIQTTQEMPGRALINVYGPTETTINSSSFPVDPADLDEGPQSISIGSPVHGTTYHILDKETLKPVGVGEIGELYIGGIQLARGYLHRDDLTAERFLEIELEEGAEPVRLYKTGDLGQWNNDGTVQFAGRADNQVKLRGYRVELDEISLAIENHDWVRNAAVIVKNDGRTGFQNLIACIELSEKEAALMDQGNHGSHHASKKSKLQVKAQLSNPGLRDDAELAARPAFDLEGAEPTPEQRARVFARKTYRFYEGGAVTQADLLGLLGATVTAGYSRKAADLAPAELGQILRWFGQYISEERLLPKYGYASPGALYATQMYFELEGVGGLKPGYYYYQPVRHQLVLISEREATGKATAQIHFIGKKSGIEPVYKNNILEVLEIETGHMVGLFEQILPAYGLDIHDRAYEPAVKDLLDVADEDYYLGTFELVPHAGARDDQAEVYVQTHGGKVAGLPEGQYRYENGELTRFSDDIVLKKHVIAINQSVYQAASFGISVYSRAEEEWLKYITLGKKLQHLMMNGLNLGFMSSGYSSKTGNPLPASRRMDAVLGANGVDSAPMYFFVGGRISDEQIGHEGMREDSVHMRGPAELIRDDLVSFLPDYMIPNRVVVFDRLPLSANGKIDVKALAASDQVNAELVERPFVAPRTETEKEIAAVWEKALRRENASVQDDFFESGGNSLIAVGLVRELNARLGVSLPLQSVLESPTIEKLARRLEREVAQESSRFVRLHAETGKARPVICWPGLGGYPMNLRSLAGEIGLGRSFYGVQSYGINEGETPYETITEMAKKDIEALKEIQPAGPYTLWGYSFGARVAFETAYQLEQAGEKVDNLFLIAPGSPKVRAENGKVWGREASFANRGYTTILFSVFTGTISGPDLDRCLETVTDEASFAEFISELKGIDVDLARRIISVVGQTYEFEYSFHELAERTLQAPISIFKAVGDDYSFLENSSGYSAEPPTVIDLDADHYSLLREDIGELVKHIRYLLGE</sequence>
<protein>
    <recommendedName>
        <fullName evidence="4">Indigoidine synthase</fullName>
        <ecNumber evidence="2">4.3.3.9</ecNumber>
    </recommendedName>
    <alternativeName>
        <fullName evidence="3">Blue pigment synthetase-encoding gene A</fullName>
    </alternativeName>
    <alternativeName>
        <fullName evidence="3">Blue-pigment synthetase</fullName>
    </alternativeName>
</protein>
<keyword id="KW-0456">Lyase</keyword>
<keyword id="KW-0596">Phosphopantetheine</keyword>
<keyword id="KW-0597">Phosphoprotein</keyword>
<name>INDGS_STRLA</name>
<reference evidence="6" key="1">
    <citation type="journal article" date="2007" name="J. Biol. Chem.">
        <title>Cloning and characterization of a Streptomyces single module type non-ribosomal peptide synthetase catalyzing a blue pigment synthesis.</title>
        <authorList>
            <person name="Takahashi H."/>
            <person name="Kumagai T."/>
            <person name="Kitani K."/>
            <person name="Mori M."/>
            <person name="Matoba Y."/>
            <person name="Sugiyama M."/>
        </authorList>
    </citation>
    <scope>NUCLEOTIDE SEQUENCE [GENOMIC DNA]</scope>
    <scope>FUNCTION</scope>
    <scope>CATALYTIC ACTIVITY</scope>
    <scope>COFACTOR</scope>
    <scope>BIOPHYSICOCHEMICAL PROPERTIES</scope>
    <scope>PATHWAY</scope>
    <scope>DOMAIN</scope>
    <scope>PHOSPHOPANTETHEINYLATION AT SER-972</scope>
    <scope>MUTAGENESIS OF LYS-598; TYR-601; SER-603 AND TYR-608</scope>
    <source>
        <strain>ATCC 11924 / 8197-20</strain>
    </source>
</reference>